<keyword id="KW-0002">3D-structure</keyword>
<keyword id="KW-0008">Acetylcholine receptor inhibiting toxin</keyword>
<keyword id="KW-0903">Direct protein sequencing</keyword>
<keyword id="KW-1015">Disulfide bond</keyword>
<keyword id="KW-0872">Ion channel impairing toxin</keyword>
<keyword id="KW-0528">Neurotoxin</keyword>
<keyword id="KW-0629">Postsynaptic neurotoxin</keyword>
<keyword id="KW-0964">Secreted</keyword>
<keyword id="KW-0732">Signal</keyword>
<keyword id="KW-0800">Toxin</keyword>
<sequence length="87" mass="9551">MKTLLLTLVVVTIVCLDLGYTRECYLNPHDTQTCPSGQEICYVKSWCNAWCSSRGKVLEFGCAATCPSVNTGTEIKCCSADKCNTYP</sequence>
<dbReference type="EMBL" id="AB015512">
    <property type="protein sequence ID" value="BAA32991.1"/>
    <property type="molecule type" value="mRNA"/>
</dbReference>
<dbReference type="EMBL" id="AB015513">
    <property type="protein sequence ID" value="BAA32992.1"/>
    <property type="molecule type" value="mRNA"/>
</dbReference>
<dbReference type="EMBL" id="AB098531">
    <property type="protein sequence ID" value="BAC78204.1"/>
    <property type="status" value="ALT_FRAME"/>
    <property type="molecule type" value="Genomic_DNA"/>
</dbReference>
<dbReference type="PDB" id="1LSI">
    <property type="method" value="NMR"/>
    <property type="chains" value="A=22-87"/>
</dbReference>
<dbReference type="PDBsum" id="1LSI"/>
<dbReference type="BMRB" id="P01379"/>
<dbReference type="SMR" id="P01379"/>
<dbReference type="EvolutionaryTrace" id="P01379"/>
<dbReference type="GO" id="GO:0005576">
    <property type="term" value="C:extracellular region"/>
    <property type="evidence" value="ECO:0007669"/>
    <property type="project" value="UniProtKB-SubCell"/>
</dbReference>
<dbReference type="GO" id="GO:0030550">
    <property type="term" value="F:acetylcholine receptor inhibitor activity"/>
    <property type="evidence" value="ECO:0007669"/>
    <property type="project" value="UniProtKB-KW"/>
</dbReference>
<dbReference type="GO" id="GO:0099106">
    <property type="term" value="F:ion channel regulator activity"/>
    <property type="evidence" value="ECO:0007669"/>
    <property type="project" value="UniProtKB-KW"/>
</dbReference>
<dbReference type="GO" id="GO:0090729">
    <property type="term" value="F:toxin activity"/>
    <property type="evidence" value="ECO:0007669"/>
    <property type="project" value="UniProtKB-KW"/>
</dbReference>
<dbReference type="CDD" id="cd00206">
    <property type="entry name" value="TFP_snake_toxin"/>
    <property type="match status" value="1"/>
</dbReference>
<dbReference type="Gene3D" id="2.10.60.10">
    <property type="entry name" value="CD59"/>
    <property type="match status" value="1"/>
</dbReference>
<dbReference type="InterPro" id="IPR003571">
    <property type="entry name" value="Snake_3FTx"/>
</dbReference>
<dbReference type="InterPro" id="IPR045860">
    <property type="entry name" value="Snake_toxin-like_sf"/>
</dbReference>
<dbReference type="InterPro" id="IPR018354">
    <property type="entry name" value="Snake_toxin_con_site"/>
</dbReference>
<dbReference type="InterPro" id="IPR054131">
    <property type="entry name" value="Toxin_cobra-type"/>
</dbReference>
<dbReference type="Pfam" id="PF21947">
    <property type="entry name" value="Toxin_cobra-type"/>
    <property type="match status" value="1"/>
</dbReference>
<dbReference type="SUPFAM" id="SSF57302">
    <property type="entry name" value="Snake toxin-like"/>
    <property type="match status" value="1"/>
</dbReference>
<dbReference type="PROSITE" id="PS00272">
    <property type="entry name" value="SNAKE_TOXIN"/>
    <property type="match status" value="1"/>
</dbReference>
<feature type="signal peptide" evidence="2">
    <location>
        <begin position="1"/>
        <end position="21"/>
    </location>
</feature>
<feature type="chain" id="PRO_0000035430" description="Alpha-elapitoxin-Ls2a" evidence="2">
    <location>
        <begin position="22"/>
        <end position="87"/>
    </location>
</feature>
<feature type="disulfide bond" evidence="3 11">
    <location>
        <begin position="24"/>
        <end position="41"/>
    </location>
</feature>
<feature type="disulfide bond" evidence="3 11">
    <location>
        <begin position="34"/>
        <end position="62"/>
    </location>
</feature>
<feature type="disulfide bond" evidence="3 11">
    <location>
        <begin position="47"/>
        <end position="51"/>
    </location>
</feature>
<feature type="disulfide bond" evidence="3 11">
    <location>
        <begin position="66"/>
        <end position="77"/>
    </location>
</feature>
<feature type="disulfide bond" evidence="3 11">
    <location>
        <begin position="78"/>
        <end position="83"/>
    </location>
</feature>
<feature type="sequence variant" description="In LSIII-5." evidence="5">
    <original>I</original>
    <variation>K</variation>
    <location>
        <position position="40"/>
    </location>
</feature>
<feature type="strand" evidence="12">
    <location>
        <begin position="24"/>
        <end position="26"/>
    </location>
</feature>
<feature type="strand" evidence="12">
    <location>
        <begin position="40"/>
        <end position="45"/>
    </location>
</feature>
<feature type="strand" evidence="12">
    <location>
        <begin position="59"/>
        <end position="65"/>
    </location>
</feature>
<feature type="strand" evidence="12">
    <location>
        <begin position="74"/>
        <end position="80"/>
    </location>
</feature>
<feature type="turn" evidence="12">
    <location>
        <begin position="81"/>
        <end position="84"/>
    </location>
</feature>
<evidence type="ECO:0000269" key="1">
    <source>
    </source>
</evidence>
<evidence type="ECO:0000269" key="2">
    <source>
    </source>
</evidence>
<evidence type="ECO:0000269" key="3">
    <source>
    </source>
</evidence>
<evidence type="ECO:0000269" key="4">
    <source>
    </source>
</evidence>
<evidence type="ECO:0000269" key="5">
    <source>
    </source>
</evidence>
<evidence type="ECO:0000303" key="6">
    <source>
    </source>
</evidence>
<evidence type="ECO:0000303" key="7">
    <source>
    </source>
</evidence>
<evidence type="ECO:0000303" key="8">
    <source>
    </source>
</evidence>
<evidence type="ECO:0000305" key="9"/>
<evidence type="ECO:0000305" key="10">
    <source>
    </source>
</evidence>
<evidence type="ECO:0000312" key="11">
    <source>
        <dbReference type="PDB" id="1LSI"/>
    </source>
</evidence>
<evidence type="ECO:0007829" key="12">
    <source>
        <dbReference type="PDB" id="1LSI"/>
    </source>
</evidence>
<proteinExistence type="evidence at protein level"/>
<name>3L21_LATSE</name>
<accession>P01379</accession>
<accession>O93496</accession>
<accession>Q7T2I4</accession>
<comment type="function">
    <text evidence="1 4">Binds with high affinity to muscular (tested on Torpedo marmorata, Kd=1.6 nM) and neuronal (chimeric alpha-7/CHRNA7, Kd=3 nM) nicotinic acetylcholine receptor (nAChR) and inhibits acetylcholine from binding to the receptor, thereby impairing neuromuscular and neuronal transmission (PubMed:9305882). Also shows a very weak inhibition on GABA(A) receptors (PubMed:26221036). The toxin (10 uM) inhibits 83% of current in channels composed of alpha-1-beta-3-gamma-2 (GABRA1-GABRB3-GABRG2) subunits, 39% of current in channels composed of alpha-2-beta-2-gamma-2 (GABRA2-GABRB2-GABRG2) subunits, and 33% of current in channels composed of alpha-5-beta-2-gamma-2 (GABRA5-GABRB2-GABRG2) subunits (PubMed:26221036).</text>
</comment>
<comment type="subcellular location">
    <subcellularLocation>
        <location evidence="2">Secreted</location>
    </subcellularLocation>
</comment>
<comment type="tissue specificity">
    <text evidence="10">Expressed by the venom gland.</text>
</comment>
<comment type="toxic dose">
    <text evidence="2">LD(50) is 1.24 mg/kg by intramuscular injection.</text>
</comment>
<comment type="similarity">
    <text evidence="9">Belongs to the three-finger toxin family. Long-chain subfamily. Type II alpha-neurotoxin sub-subfamily.</text>
</comment>
<comment type="sequence caution" evidence="9">
    <conflict type="frameshift">
        <sequence resource="EMBL-CDS" id="BAC78204"/>
    </conflict>
</comment>
<protein>
    <recommendedName>
        <fullName>Alpha-elapitoxin-Ls2a</fullName>
        <shortName>Alpha-EPTX-Ls2a</shortName>
    </recommendedName>
    <alternativeName>
        <fullName>Long neurotoxin Ls3</fullName>
    </alternativeName>
    <alternativeName>
        <fullName evidence="7 8">LsIII</fullName>
        <shortName evidence="6">Ls III</shortName>
    </alternativeName>
    <alternativeName>
        <fullName>Neurotoxin 1</fullName>
    </alternativeName>
    <alternativeName>
        <fullName>Neurotoxin alpha</fullName>
    </alternativeName>
</protein>
<reference key="1">
    <citation type="journal article" date="1999" name="Toxicon">
        <title>Complete nucleotide sequences of cDNAs encoding long chain alpha-neurotoxins from sea krait, Laticauda semifasciata.</title>
        <authorList>
            <person name="Tamiya T."/>
            <person name="Ohno S."/>
            <person name="Nishimura E."/>
            <person name="Fujimi T.J."/>
            <person name="Tsuchiya T."/>
        </authorList>
    </citation>
    <scope>NUCLEOTIDE SEQUENCE [MRNA]</scope>
    <scope>VARIANT LSIII-5 LYS-40</scope>
    <source>
        <tissue>Venom gland</tissue>
    </source>
</reference>
<reference key="2">
    <citation type="journal article" date="2003" name="Gene">
        <title>Molecular evolution and diversification of snake toxin genes, revealed by analysis of intron sequences.</title>
        <authorList>
            <person name="Fujimi T.J."/>
            <person name="Nakajyo T."/>
            <person name="Nishimura E."/>
            <person name="Ogura E."/>
            <person name="Tsuchiya T."/>
            <person name="Tamiya T."/>
        </authorList>
    </citation>
    <scope>NUCLEOTIDE SEQUENCE [GENOMIC DNA]</scope>
</reference>
<reference key="3">
    <citation type="journal article" date="1974" name="Biochem. J.">
        <title>The primary structure of the toxin Laticauda semifasciata III, a weak and reversibly acting neurotoxin from the venom of a sea snake, Laticauda semifasciata.</title>
        <authorList>
            <person name="Maeda N."/>
            <person name="Tamiya N."/>
        </authorList>
    </citation>
    <scope>PROTEIN SEQUENCE OF 22-87</scope>
    <scope>TOXIC DOSE</scope>
    <scope>SUBCELLULAR LOCATION</scope>
    <source>
        <tissue>Venom</tissue>
    </source>
</reference>
<reference key="4">
    <citation type="journal article" date="1997" name="J. Biol. Chem.">
        <title>Only snake curaremimetic toxins with a fifth disulfide bond have high affinity for the neuronal alpha7 nicotinic receptor.</title>
        <authorList>
            <person name="Servent D."/>
            <person name="Winckler-Dietrich V."/>
            <person name="Hu H.-Y."/>
            <person name="Kessler P."/>
            <person name="Drevet P."/>
            <person name="Bertrand D."/>
            <person name="Menez A."/>
        </authorList>
    </citation>
    <scope>FUNCTION</scope>
    <source>
        <tissue>Venom</tissue>
    </source>
</reference>
<reference key="5">
    <citation type="journal article" date="2015" name="J. Biol. Chem.">
        <title>Neurotoxins from snake venoms and alpha-conotoxin ImI inhibit functionally active ionotropic gamma-aminobutyric acid (GABA) receptors.</title>
        <authorList>
            <person name="Kudryavtsev D.S."/>
            <person name="Shelukhina I.V."/>
            <person name="Son L.V."/>
            <person name="Ojomoko L.O."/>
            <person name="Kryukova E.V."/>
            <person name="Lyukmanova E.N."/>
            <person name="Zhmak M.N."/>
            <person name="Dolgikh D.A."/>
            <person name="Ivanov I.A."/>
            <person name="Kasheverov I.E."/>
            <person name="Starkov V.G."/>
            <person name="Ramerstorfer J."/>
            <person name="Sieghart W."/>
            <person name="Tsetlin V.I."/>
            <person name="Utkin Y.N."/>
        </authorList>
    </citation>
    <scope>FUNCTION</scope>
</reference>
<reference key="6">
    <citation type="journal article" date="1996" name="Biochemistry">
        <title>Solution structure of LSIII, a long neurotoxin from the venom of Laticauda semifasciata.</title>
        <authorList>
            <person name="Connolly P.J."/>
            <person name="Stern A.S."/>
            <person name="Hoch J.C."/>
        </authorList>
    </citation>
    <scope>STRUCTURE BY NMR OF 22-87</scope>
    <scope>DISULFIDE BONDS</scope>
</reference>
<organism>
    <name type="scientific">Laticauda semifasciata</name>
    <name type="common">Black-banded sea krait</name>
    <name type="synonym">Pseudolaticauda semifasciata</name>
    <dbReference type="NCBI Taxonomy" id="8631"/>
    <lineage>
        <taxon>Eukaryota</taxon>
        <taxon>Metazoa</taxon>
        <taxon>Chordata</taxon>
        <taxon>Craniata</taxon>
        <taxon>Vertebrata</taxon>
        <taxon>Euteleostomi</taxon>
        <taxon>Lepidosauria</taxon>
        <taxon>Squamata</taxon>
        <taxon>Bifurcata</taxon>
        <taxon>Unidentata</taxon>
        <taxon>Episquamata</taxon>
        <taxon>Toxicofera</taxon>
        <taxon>Serpentes</taxon>
        <taxon>Colubroidea</taxon>
        <taxon>Elapidae</taxon>
        <taxon>Laticaudinae</taxon>
        <taxon>Laticauda</taxon>
    </lineage>
</organism>